<protein>
    <recommendedName>
        <fullName evidence="2">Phosphoribosylamine--glycine ligase</fullName>
        <ecNumber evidence="2">6.3.4.13</ecNumber>
    </recommendedName>
    <alternativeName>
        <fullName evidence="2">GARS</fullName>
    </alternativeName>
    <alternativeName>
        <fullName evidence="2">Glycinamide ribonucleotide synthetase</fullName>
    </alternativeName>
    <alternativeName>
        <fullName evidence="2">Phosphoribosylglycinamide synthetase</fullName>
    </alternativeName>
</protein>
<comment type="catalytic activity">
    <reaction evidence="2">
        <text>5-phospho-beta-D-ribosylamine + glycine + ATP = N(1)-(5-phospho-beta-D-ribosyl)glycinamide + ADP + phosphate + H(+)</text>
        <dbReference type="Rhea" id="RHEA:17453"/>
        <dbReference type="ChEBI" id="CHEBI:15378"/>
        <dbReference type="ChEBI" id="CHEBI:30616"/>
        <dbReference type="ChEBI" id="CHEBI:43474"/>
        <dbReference type="ChEBI" id="CHEBI:57305"/>
        <dbReference type="ChEBI" id="CHEBI:58681"/>
        <dbReference type="ChEBI" id="CHEBI:143788"/>
        <dbReference type="ChEBI" id="CHEBI:456216"/>
        <dbReference type="EC" id="6.3.4.13"/>
    </reaction>
</comment>
<comment type="cofactor">
    <cofactor evidence="1">
        <name>Mg(2+)</name>
        <dbReference type="ChEBI" id="CHEBI:18420"/>
    </cofactor>
    <cofactor evidence="1">
        <name>Mn(2+)</name>
        <dbReference type="ChEBI" id="CHEBI:29035"/>
    </cofactor>
    <text evidence="1">Binds 2 magnesium or manganese ions per subunit.</text>
</comment>
<comment type="pathway">
    <text evidence="2">Purine metabolism; IMP biosynthesis via de novo pathway; N(1)-(5-phospho-D-ribosyl)glycinamide from 5-phospho-alpha-D-ribose 1-diphosphate: step 2/2.</text>
</comment>
<comment type="similarity">
    <text evidence="2">Belongs to the GARS family.</text>
</comment>
<proteinExistence type="inferred from homology"/>
<reference key="1">
    <citation type="journal article" date="2008" name="BMC Genomics">
        <title>Complete genome of Phenylobacterium zucineum - a novel facultative intracellular bacterium isolated from human erythroleukemia cell line K562.</title>
        <authorList>
            <person name="Luo Y."/>
            <person name="Xu X."/>
            <person name="Ding Z."/>
            <person name="Liu Z."/>
            <person name="Zhang B."/>
            <person name="Yan Z."/>
            <person name="Sun J."/>
            <person name="Hu S."/>
            <person name="Hu X."/>
        </authorList>
    </citation>
    <scope>NUCLEOTIDE SEQUENCE [LARGE SCALE GENOMIC DNA]</scope>
    <source>
        <strain>HLK1</strain>
    </source>
</reference>
<feature type="chain" id="PRO_1000096035" description="Phosphoribosylamine--glycine ligase">
    <location>
        <begin position="1"/>
        <end position="423"/>
    </location>
</feature>
<feature type="domain" description="ATP-grasp" evidence="2">
    <location>
        <begin position="107"/>
        <end position="312"/>
    </location>
</feature>
<feature type="binding site" evidence="2">
    <location>
        <begin position="133"/>
        <end position="193"/>
    </location>
    <ligand>
        <name>ATP</name>
        <dbReference type="ChEBI" id="CHEBI:30616"/>
    </ligand>
</feature>
<feature type="binding site" evidence="2">
    <location>
        <position position="270"/>
    </location>
    <ligand>
        <name>Mg(2+)</name>
        <dbReference type="ChEBI" id="CHEBI:18420"/>
        <label>1</label>
    </ligand>
</feature>
<feature type="binding site" evidence="2">
    <location>
        <position position="270"/>
    </location>
    <ligand>
        <name>Mn(2+)</name>
        <dbReference type="ChEBI" id="CHEBI:29035"/>
        <label>1</label>
    </ligand>
</feature>
<feature type="binding site" evidence="2">
    <location>
        <position position="282"/>
    </location>
    <ligand>
        <name>Mg(2+)</name>
        <dbReference type="ChEBI" id="CHEBI:18420"/>
        <label>1</label>
    </ligand>
</feature>
<feature type="binding site" evidence="2">
    <location>
        <position position="282"/>
    </location>
    <ligand>
        <name>Mg(2+)</name>
        <dbReference type="ChEBI" id="CHEBI:18420"/>
        <label>2</label>
    </ligand>
</feature>
<feature type="binding site" evidence="2">
    <location>
        <position position="282"/>
    </location>
    <ligand>
        <name>Mn(2+)</name>
        <dbReference type="ChEBI" id="CHEBI:29035"/>
        <label>1</label>
    </ligand>
</feature>
<feature type="binding site" evidence="2">
    <location>
        <position position="282"/>
    </location>
    <ligand>
        <name>Mn(2+)</name>
        <dbReference type="ChEBI" id="CHEBI:29035"/>
        <label>2</label>
    </ligand>
</feature>
<feature type="binding site" evidence="2">
    <location>
        <position position="284"/>
    </location>
    <ligand>
        <name>Mg(2+)</name>
        <dbReference type="ChEBI" id="CHEBI:18420"/>
        <label>2</label>
    </ligand>
</feature>
<feature type="binding site" evidence="2">
    <location>
        <position position="284"/>
    </location>
    <ligand>
        <name>Mn(2+)</name>
        <dbReference type="ChEBI" id="CHEBI:29035"/>
        <label>2</label>
    </ligand>
</feature>
<evidence type="ECO:0000250" key="1"/>
<evidence type="ECO:0000255" key="2">
    <source>
        <dbReference type="HAMAP-Rule" id="MF_00138"/>
    </source>
</evidence>
<gene>
    <name evidence="2" type="primary">purD</name>
    <name type="ordered locus">PHZ_c0508</name>
</gene>
<name>PUR2_PHEZH</name>
<sequence length="423" mass="44229">MNILLVGSGGREHALAWKIAASPLVKRLVAAPGNPGMAEQCELRAVGPTDVPALVALAKEIAADLVVIGPESSVDAGLADQLQAEGIPCFGPTAGAGQLESSKAFTKAFADRYGLPTAAYRVCESAEAARAALELFEPPYVIKADGLAAGKGVTVAQDRGEAEAAIDDAFGGRFGAAGARVVVEEFLEGEIGSLFALCDGEASMLFGWAQDHKRVFDGEQGPNTGGMGTYSPAPVFTPELVEQVRTRLVEPAFAGIAADGSPYRGVLFVELMATKHGPKLVEFNVRFGDPECQVLMLRLESDLVPYLVACANGTLGDMPPPVWRDEAAVCVVIAAKGYPGTPAAGGEIRGLDQDLGDDVVVFHAGTKRDADGTLRAAGGRVLNVCARGADLRTARDRAYAAIERIEFADGFCRSDIGWRALGR</sequence>
<keyword id="KW-0067">ATP-binding</keyword>
<keyword id="KW-0436">Ligase</keyword>
<keyword id="KW-0460">Magnesium</keyword>
<keyword id="KW-0464">Manganese</keyword>
<keyword id="KW-0479">Metal-binding</keyword>
<keyword id="KW-0547">Nucleotide-binding</keyword>
<keyword id="KW-0658">Purine biosynthesis</keyword>
<keyword id="KW-1185">Reference proteome</keyword>
<dbReference type="EC" id="6.3.4.13" evidence="2"/>
<dbReference type="EMBL" id="CP000747">
    <property type="protein sequence ID" value="ACG76922.1"/>
    <property type="molecule type" value="Genomic_DNA"/>
</dbReference>
<dbReference type="RefSeq" id="WP_012521070.1">
    <property type="nucleotide sequence ID" value="NC_011144.1"/>
</dbReference>
<dbReference type="SMR" id="B4REI0"/>
<dbReference type="STRING" id="450851.PHZ_c0508"/>
<dbReference type="KEGG" id="pzu:PHZ_c0508"/>
<dbReference type="eggNOG" id="COG0151">
    <property type="taxonomic scope" value="Bacteria"/>
</dbReference>
<dbReference type="HOGENOM" id="CLU_027420_3_1_5"/>
<dbReference type="OrthoDB" id="9807240at2"/>
<dbReference type="UniPathway" id="UPA00074">
    <property type="reaction ID" value="UER00125"/>
</dbReference>
<dbReference type="Proteomes" id="UP000001868">
    <property type="component" value="Chromosome"/>
</dbReference>
<dbReference type="GO" id="GO:0005524">
    <property type="term" value="F:ATP binding"/>
    <property type="evidence" value="ECO:0007669"/>
    <property type="project" value="UniProtKB-KW"/>
</dbReference>
<dbReference type="GO" id="GO:0046872">
    <property type="term" value="F:metal ion binding"/>
    <property type="evidence" value="ECO:0007669"/>
    <property type="project" value="UniProtKB-KW"/>
</dbReference>
<dbReference type="GO" id="GO:0004637">
    <property type="term" value="F:phosphoribosylamine-glycine ligase activity"/>
    <property type="evidence" value="ECO:0007669"/>
    <property type="project" value="UniProtKB-UniRule"/>
</dbReference>
<dbReference type="GO" id="GO:0006189">
    <property type="term" value="P:'de novo' IMP biosynthetic process"/>
    <property type="evidence" value="ECO:0007669"/>
    <property type="project" value="UniProtKB-UniRule"/>
</dbReference>
<dbReference type="GO" id="GO:0009113">
    <property type="term" value="P:purine nucleobase biosynthetic process"/>
    <property type="evidence" value="ECO:0007669"/>
    <property type="project" value="InterPro"/>
</dbReference>
<dbReference type="FunFam" id="3.90.600.10:FF:000001">
    <property type="entry name" value="Trifunctional purine biosynthetic protein adenosine-3"/>
    <property type="match status" value="1"/>
</dbReference>
<dbReference type="Gene3D" id="3.40.50.20">
    <property type="match status" value="1"/>
</dbReference>
<dbReference type="Gene3D" id="3.30.1490.20">
    <property type="entry name" value="ATP-grasp fold, A domain"/>
    <property type="match status" value="1"/>
</dbReference>
<dbReference type="Gene3D" id="3.30.470.20">
    <property type="entry name" value="ATP-grasp fold, B domain"/>
    <property type="match status" value="1"/>
</dbReference>
<dbReference type="Gene3D" id="3.90.600.10">
    <property type="entry name" value="Phosphoribosylglycinamide synthetase, C-terminal domain"/>
    <property type="match status" value="1"/>
</dbReference>
<dbReference type="HAMAP" id="MF_00138">
    <property type="entry name" value="GARS"/>
    <property type="match status" value="1"/>
</dbReference>
<dbReference type="InterPro" id="IPR011761">
    <property type="entry name" value="ATP-grasp"/>
</dbReference>
<dbReference type="InterPro" id="IPR013815">
    <property type="entry name" value="ATP_grasp_subdomain_1"/>
</dbReference>
<dbReference type="InterPro" id="IPR016185">
    <property type="entry name" value="PreATP-grasp_dom_sf"/>
</dbReference>
<dbReference type="InterPro" id="IPR020561">
    <property type="entry name" value="PRibGlycinamid_synth_ATP-grasp"/>
</dbReference>
<dbReference type="InterPro" id="IPR000115">
    <property type="entry name" value="PRibGlycinamide_synth"/>
</dbReference>
<dbReference type="InterPro" id="IPR020560">
    <property type="entry name" value="PRibGlycinamide_synth_C-dom"/>
</dbReference>
<dbReference type="InterPro" id="IPR037123">
    <property type="entry name" value="PRibGlycinamide_synth_C_sf"/>
</dbReference>
<dbReference type="InterPro" id="IPR020559">
    <property type="entry name" value="PRibGlycinamide_synth_CS"/>
</dbReference>
<dbReference type="InterPro" id="IPR020562">
    <property type="entry name" value="PRibGlycinamide_synth_N"/>
</dbReference>
<dbReference type="InterPro" id="IPR011054">
    <property type="entry name" value="Rudment_hybrid_motif"/>
</dbReference>
<dbReference type="NCBIfam" id="TIGR00877">
    <property type="entry name" value="purD"/>
    <property type="match status" value="1"/>
</dbReference>
<dbReference type="PANTHER" id="PTHR43472">
    <property type="entry name" value="PHOSPHORIBOSYLAMINE--GLYCINE LIGASE"/>
    <property type="match status" value="1"/>
</dbReference>
<dbReference type="PANTHER" id="PTHR43472:SF1">
    <property type="entry name" value="PHOSPHORIBOSYLAMINE--GLYCINE LIGASE, CHLOROPLASTIC"/>
    <property type="match status" value="1"/>
</dbReference>
<dbReference type="Pfam" id="PF01071">
    <property type="entry name" value="GARS_A"/>
    <property type="match status" value="1"/>
</dbReference>
<dbReference type="Pfam" id="PF02843">
    <property type="entry name" value="GARS_C"/>
    <property type="match status" value="1"/>
</dbReference>
<dbReference type="Pfam" id="PF02844">
    <property type="entry name" value="GARS_N"/>
    <property type="match status" value="1"/>
</dbReference>
<dbReference type="SMART" id="SM01209">
    <property type="entry name" value="GARS_A"/>
    <property type="match status" value="1"/>
</dbReference>
<dbReference type="SMART" id="SM01210">
    <property type="entry name" value="GARS_C"/>
    <property type="match status" value="1"/>
</dbReference>
<dbReference type="SUPFAM" id="SSF56059">
    <property type="entry name" value="Glutathione synthetase ATP-binding domain-like"/>
    <property type="match status" value="1"/>
</dbReference>
<dbReference type="SUPFAM" id="SSF52440">
    <property type="entry name" value="PreATP-grasp domain"/>
    <property type="match status" value="1"/>
</dbReference>
<dbReference type="SUPFAM" id="SSF51246">
    <property type="entry name" value="Rudiment single hybrid motif"/>
    <property type="match status" value="1"/>
</dbReference>
<dbReference type="PROSITE" id="PS50975">
    <property type="entry name" value="ATP_GRASP"/>
    <property type="match status" value="1"/>
</dbReference>
<dbReference type="PROSITE" id="PS00184">
    <property type="entry name" value="GARS"/>
    <property type="match status" value="1"/>
</dbReference>
<organism>
    <name type="scientific">Phenylobacterium zucineum (strain HLK1)</name>
    <dbReference type="NCBI Taxonomy" id="450851"/>
    <lineage>
        <taxon>Bacteria</taxon>
        <taxon>Pseudomonadati</taxon>
        <taxon>Pseudomonadota</taxon>
        <taxon>Alphaproteobacteria</taxon>
        <taxon>Caulobacterales</taxon>
        <taxon>Caulobacteraceae</taxon>
        <taxon>Phenylobacterium</taxon>
    </lineage>
</organism>
<accession>B4REI0</accession>